<reference key="1">
    <citation type="journal article" date="2001" name="Biochem. J.">
        <title>Characterization of monocot and dicot plant S-adenosyl-L-methionine decarboxylase gene families including identification in the mRNA of a highly conserved pair of upstream overlapping open reading frames.</title>
        <authorList>
            <person name="Franceschetti M."/>
            <person name="Hanfrey C."/>
            <person name="Scaramagli S."/>
            <person name="Torrigiani P."/>
            <person name="Bagni N."/>
            <person name="Michael A.J."/>
        </authorList>
    </citation>
    <scope>NUCLEOTIDE SEQUENCE [MRNA]</scope>
    <source>
        <strain>cv. Nipponbare</strain>
    </source>
</reference>
<reference key="2">
    <citation type="journal article" date="2002" name="Nature">
        <title>Sequence and analysis of rice chromosome 4.</title>
        <authorList>
            <person name="Feng Q."/>
            <person name="Zhang Y."/>
            <person name="Hao P."/>
            <person name="Wang S."/>
            <person name="Fu G."/>
            <person name="Huang Y."/>
            <person name="Li Y."/>
            <person name="Zhu J."/>
            <person name="Liu Y."/>
            <person name="Hu X."/>
            <person name="Jia P."/>
            <person name="Zhang Y."/>
            <person name="Zhao Q."/>
            <person name="Ying K."/>
            <person name="Yu S."/>
            <person name="Tang Y."/>
            <person name="Weng Q."/>
            <person name="Zhang L."/>
            <person name="Lu Y."/>
            <person name="Mu J."/>
            <person name="Lu Y."/>
            <person name="Zhang L.S."/>
            <person name="Yu Z."/>
            <person name="Fan D."/>
            <person name="Liu X."/>
            <person name="Lu T."/>
            <person name="Li C."/>
            <person name="Wu Y."/>
            <person name="Sun T."/>
            <person name="Lei H."/>
            <person name="Li T."/>
            <person name="Hu H."/>
            <person name="Guan J."/>
            <person name="Wu M."/>
            <person name="Zhang R."/>
            <person name="Zhou B."/>
            <person name="Chen Z."/>
            <person name="Chen L."/>
            <person name="Jin Z."/>
            <person name="Wang R."/>
            <person name="Yin H."/>
            <person name="Cai Z."/>
            <person name="Ren S."/>
            <person name="Lv G."/>
            <person name="Gu W."/>
            <person name="Zhu G."/>
            <person name="Tu Y."/>
            <person name="Jia J."/>
            <person name="Zhang Y."/>
            <person name="Chen J."/>
            <person name="Kang H."/>
            <person name="Chen X."/>
            <person name="Shao C."/>
            <person name="Sun Y."/>
            <person name="Hu Q."/>
            <person name="Zhang X."/>
            <person name="Zhang W."/>
            <person name="Wang L."/>
            <person name="Ding C."/>
            <person name="Sheng H."/>
            <person name="Gu J."/>
            <person name="Chen S."/>
            <person name="Ni L."/>
            <person name="Zhu F."/>
            <person name="Chen W."/>
            <person name="Lan L."/>
            <person name="Lai Y."/>
            <person name="Cheng Z."/>
            <person name="Gu M."/>
            <person name="Jiang J."/>
            <person name="Li J."/>
            <person name="Hong G."/>
            <person name="Xue Y."/>
            <person name="Han B."/>
        </authorList>
    </citation>
    <scope>NUCLEOTIDE SEQUENCE [LARGE SCALE GENOMIC DNA]</scope>
    <source>
        <strain>cv. Nipponbare</strain>
    </source>
</reference>
<reference key="3">
    <citation type="journal article" date="2005" name="Nature">
        <title>The map-based sequence of the rice genome.</title>
        <authorList>
            <consortium name="International rice genome sequencing project (IRGSP)"/>
        </authorList>
    </citation>
    <scope>NUCLEOTIDE SEQUENCE [LARGE SCALE GENOMIC DNA]</scope>
    <source>
        <strain>cv. Nipponbare</strain>
    </source>
</reference>
<reference key="4">
    <citation type="journal article" date="2008" name="Nucleic Acids Res.">
        <title>The rice annotation project database (RAP-DB): 2008 update.</title>
        <authorList>
            <consortium name="The rice annotation project (RAP)"/>
        </authorList>
    </citation>
    <scope>GENOME REANNOTATION</scope>
    <source>
        <strain>cv. Nipponbare</strain>
    </source>
</reference>
<reference key="5">
    <citation type="journal article" date="2013" name="Rice">
        <title>Improvement of the Oryza sativa Nipponbare reference genome using next generation sequence and optical map data.</title>
        <authorList>
            <person name="Kawahara Y."/>
            <person name="de la Bastide M."/>
            <person name="Hamilton J.P."/>
            <person name="Kanamori H."/>
            <person name="McCombie W.R."/>
            <person name="Ouyang S."/>
            <person name="Schwartz D.C."/>
            <person name="Tanaka T."/>
            <person name="Wu J."/>
            <person name="Zhou S."/>
            <person name="Childs K.L."/>
            <person name="Davidson R.M."/>
            <person name="Lin H."/>
            <person name="Quesada-Ocampo L."/>
            <person name="Vaillancourt B."/>
            <person name="Sakai H."/>
            <person name="Lee S.S."/>
            <person name="Kim J."/>
            <person name="Numa H."/>
            <person name="Itoh T."/>
            <person name="Buell C.R."/>
            <person name="Matsumoto T."/>
        </authorList>
    </citation>
    <scope>GENOME REANNOTATION</scope>
    <source>
        <strain>cv. Nipponbare</strain>
    </source>
</reference>
<reference key="6">
    <citation type="journal article" date="2005" name="PLoS Biol.">
        <title>The genomes of Oryza sativa: a history of duplications.</title>
        <authorList>
            <person name="Yu J."/>
            <person name="Wang J."/>
            <person name="Lin W."/>
            <person name="Li S."/>
            <person name="Li H."/>
            <person name="Zhou J."/>
            <person name="Ni P."/>
            <person name="Dong W."/>
            <person name="Hu S."/>
            <person name="Zeng C."/>
            <person name="Zhang J."/>
            <person name="Zhang Y."/>
            <person name="Li R."/>
            <person name="Xu Z."/>
            <person name="Li S."/>
            <person name="Li X."/>
            <person name="Zheng H."/>
            <person name="Cong L."/>
            <person name="Lin L."/>
            <person name="Yin J."/>
            <person name="Geng J."/>
            <person name="Li G."/>
            <person name="Shi J."/>
            <person name="Liu J."/>
            <person name="Lv H."/>
            <person name="Li J."/>
            <person name="Wang J."/>
            <person name="Deng Y."/>
            <person name="Ran L."/>
            <person name="Shi X."/>
            <person name="Wang X."/>
            <person name="Wu Q."/>
            <person name="Li C."/>
            <person name="Ren X."/>
            <person name="Wang J."/>
            <person name="Wang X."/>
            <person name="Li D."/>
            <person name="Liu D."/>
            <person name="Zhang X."/>
            <person name="Ji Z."/>
            <person name="Zhao W."/>
            <person name="Sun Y."/>
            <person name="Zhang Z."/>
            <person name="Bao J."/>
            <person name="Han Y."/>
            <person name="Dong L."/>
            <person name="Ji J."/>
            <person name="Chen P."/>
            <person name="Wu S."/>
            <person name="Liu J."/>
            <person name="Xiao Y."/>
            <person name="Bu D."/>
            <person name="Tan J."/>
            <person name="Yang L."/>
            <person name="Ye C."/>
            <person name="Zhang J."/>
            <person name="Xu J."/>
            <person name="Zhou Y."/>
            <person name="Yu Y."/>
            <person name="Zhang B."/>
            <person name="Zhuang S."/>
            <person name="Wei H."/>
            <person name="Liu B."/>
            <person name="Lei M."/>
            <person name="Yu H."/>
            <person name="Li Y."/>
            <person name="Xu H."/>
            <person name="Wei S."/>
            <person name="He X."/>
            <person name="Fang L."/>
            <person name="Zhang Z."/>
            <person name="Zhang Y."/>
            <person name="Huang X."/>
            <person name="Su Z."/>
            <person name="Tong W."/>
            <person name="Li J."/>
            <person name="Tong Z."/>
            <person name="Li S."/>
            <person name="Ye J."/>
            <person name="Wang L."/>
            <person name="Fang L."/>
            <person name="Lei T."/>
            <person name="Chen C.-S."/>
            <person name="Chen H.-C."/>
            <person name="Xu Z."/>
            <person name="Li H."/>
            <person name="Huang H."/>
            <person name="Zhang F."/>
            <person name="Xu H."/>
            <person name="Li N."/>
            <person name="Zhao C."/>
            <person name="Li S."/>
            <person name="Dong L."/>
            <person name="Huang Y."/>
            <person name="Li L."/>
            <person name="Xi Y."/>
            <person name="Qi Q."/>
            <person name="Li W."/>
            <person name="Zhang B."/>
            <person name="Hu W."/>
            <person name="Zhang Y."/>
            <person name="Tian X."/>
            <person name="Jiao Y."/>
            <person name="Liang X."/>
            <person name="Jin J."/>
            <person name="Gao L."/>
            <person name="Zheng W."/>
            <person name="Hao B."/>
            <person name="Liu S.-M."/>
            <person name="Wang W."/>
            <person name="Yuan L."/>
            <person name="Cao M."/>
            <person name="McDermott J."/>
            <person name="Samudrala R."/>
            <person name="Wang J."/>
            <person name="Wong G.K.-S."/>
            <person name="Yang H."/>
        </authorList>
    </citation>
    <scope>NUCLEOTIDE SEQUENCE [LARGE SCALE GENOMIC DNA]</scope>
    <source>
        <strain>cv. Nipponbare</strain>
    </source>
</reference>
<name>DCAM_ORYSJ</name>
<comment type="catalytic activity">
    <reaction>
        <text>S-adenosyl-L-methionine + H(+) = S-adenosyl 3-(methylsulfanyl)propylamine + CO2</text>
        <dbReference type="Rhea" id="RHEA:15981"/>
        <dbReference type="ChEBI" id="CHEBI:15378"/>
        <dbReference type="ChEBI" id="CHEBI:16526"/>
        <dbReference type="ChEBI" id="CHEBI:57443"/>
        <dbReference type="ChEBI" id="CHEBI:59789"/>
        <dbReference type="EC" id="4.1.1.50"/>
    </reaction>
</comment>
<comment type="cofactor">
    <cofactor>
        <name>pyruvate</name>
        <dbReference type="ChEBI" id="CHEBI:15361"/>
    </cofactor>
    <text>Binds 1 pyruvoyl group covalently per subunit.</text>
</comment>
<comment type="pathway">
    <text>Amine and polyamine biosynthesis; S-adenosylmethioninamine biosynthesis; S-adenosylmethioninamine from S-adenosyl-L-methionine: step 1/1.</text>
</comment>
<comment type="PTM">
    <text evidence="1">Is synthesized initially as an inactive proenzyme. Formation of the active enzyme involves a self-maturation process in which the active site pyruvoyl group is generated from an internal serine residue via an autocatalytic post-translational modification. Two non-identical subunits are generated from the proenzyme in this reaction, and the pyruvate is formed at the N-terminus of the alpha chain, which is derived from the carboxyl end of the proenzyme. The post-translation cleavage follows an unusual pathway, termed non-hydrolytic serinolysis, in which the side chain hydroxyl group of the serine supplies its oxygen atom to form the C-terminus of the beta chain, while the remainder of the serine residue undergoes an oxidative deamination to produce ammonia and the pyruvoyl group blocking the N-terminus of the alpha chain (By similarity).</text>
</comment>
<comment type="similarity">
    <text evidence="2">Belongs to the eukaryotic AdoMetDC family.</text>
</comment>
<comment type="sequence caution" evidence="2">
    <conflict type="erroneous gene model prediction">
        <sequence resource="EMBL-CDS" id="CAD41510"/>
    </conflict>
</comment>
<comment type="sequence caution" evidence="2">
    <conflict type="erroneous gene model prediction">
        <sequence resource="EMBL-CDS" id="EAZ14251"/>
    </conflict>
</comment>
<organism>
    <name type="scientific">Oryza sativa subsp. japonica</name>
    <name type="common">Rice</name>
    <dbReference type="NCBI Taxonomy" id="39947"/>
    <lineage>
        <taxon>Eukaryota</taxon>
        <taxon>Viridiplantae</taxon>
        <taxon>Streptophyta</taxon>
        <taxon>Embryophyta</taxon>
        <taxon>Tracheophyta</taxon>
        <taxon>Spermatophyta</taxon>
        <taxon>Magnoliopsida</taxon>
        <taxon>Liliopsida</taxon>
        <taxon>Poales</taxon>
        <taxon>Poaceae</taxon>
        <taxon>BOP clade</taxon>
        <taxon>Oryzoideae</taxon>
        <taxon>Oryzeae</taxon>
        <taxon>Oryzinae</taxon>
        <taxon>Oryza</taxon>
        <taxon>Oryza sativa</taxon>
    </lineage>
</organism>
<keyword id="KW-0068">Autocatalytic cleavage</keyword>
<keyword id="KW-0210">Decarboxylase</keyword>
<keyword id="KW-0456">Lyase</keyword>
<keyword id="KW-0620">Polyamine biosynthesis</keyword>
<keyword id="KW-0670">Pyruvate</keyword>
<keyword id="KW-1185">Reference proteome</keyword>
<keyword id="KW-0949">S-adenosyl-L-methionine</keyword>
<keyword id="KW-0704">Schiff base</keyword>
<keyword id="KW-0745">Spermidine biosynthesis</keyword>
<keyword id="KW-0865">Zymogen</keyword>
<feature type="chain" id="PRO_0000030017" description="S-adenosylmethionine decarboxylase beta chain" evidence="1">
    <location>
        <begin position="1"/>
        <end position="77"/>
    </location>
</feature>
<feature type="chain" id="PRO_0000030018" description="S-adenosylmethionine decarboxylase alpha chain" evidence="1">
    <location>
        <begin position="78"/>
        <end position="398"/>
    </location>
</feature>
<feature type="active site" evidence="1">
    <location>
        <position position="18"/>
    </location>
</feature>
<feature type="active site" evidence="1">
    <location>
        <position position="21"/>
    </location>
</feature>
<feature type="active site" description="Schiff-base intermediate with substrate; via pyruvic acid" evidence="1">
    <location>
        <position position="78"/>
    </location>
</feature>
<feature type="active site" description="Proton donor; for catalytic activity" evidence="1">
    <location>
        <position position="92"/>
    </location>
</feature>
<feature type="active site" description="Proton acceptor; for processing activity" evidence="1">
    <location>
        <position position="243"/>
    </location>
</feature>
<feature type="active site" description="Proton acceptor; for processing activity" evidence="1">
    <location>
        <position position="256"/>
    </location>
</feature>
<feature type="site" description="Cleavage (non-hydrolytic); by autolysis" evidence="1">
    <location>
        <begin position="77"/>
        <end position="78"/>
    </location>
</feature>
<feature type="modified residue" description="Pyruvic acid (Ser); by autocatalysis" evidence="1">
    <location>
        <position position="78"/>
    </location>
</feature>
<gene>
    <name type="primary">SAMDC</name>
    <name type="ordered locus">Os04g0498600</name>
    <name type="ordered locus">LOC_Os04g42090</name>
    <name type="ORF">OsJ_004076</name>
    <name type="ORF">OSJNBa0029H02.4</name>
    <name type="ORF">OSJNBa0067K08.23</name>
</gene>
<accession>Q0JC10</accession>
<accession>A2ZZV4</accession>
<accession>O24215</accession>
<accession>O81269</accession>
<accession>Q56CX9</accession>
<accession>Q7XU78</accession>
<accession>Q7XUL0</accession>
<accession>Q9SC65</accession>
<dbReference type="EC" id="4.1.1.50"/>
<dbReference type="EMBL" id="Y07766">
    <property type="protein sequence ID" value="CAA69074.2"/>
    <property type="molecule type" value="mRNA"/>
</dbReference>
<dbReference type="EMBL" id="AL606594">
    <property type="protein sequence ID" value="CAD41510.3"/>
    <property type="status" value="ALT_SEQ"/>
    <property type="molecule type" value="Genomic_DNA"/>
</dbReference>
<dbReference type="EMBL" id="AL606627">
    <property type="protein sequence ID" value="CAD41242.2"/>
    <property type="molecule type" value="Genomic_DNA"/>
</dbReference>
<dbReference type="EMBL" id="AP008210">
    <property type="protein sequence ID" value="BAF15127.1"/>
    <property type="molecule type" value="Genomic_DNA"/>
</dbReference>
<dbReference type="EMBL" id="AP014960">
    <property type="protein sequence ID" value="BAS89910.1"/>
    <property type="molecule type" value="Genomic_DNA"/>
</dbReference>
<dbReference type="EMBL" id="CM000138">
    <property type="protein sequence ID" value="EAZ14251.1"/>
    <property type="status" value="ALT_SEQ"/>
    <property type="molecule type" value="Genomic_DNA"/>
</dbReference>
<dbReference type="PIR" id="T04099">
    <property type="entry name" value="T04099"/>
</dbReference>
<dbReference type="RefSeq" id="XP_015635570.1">
    <property type="nucleotide sequence ID" value="XM_015780084.1"/>
</dbReference>
<dbReference type="RefSeq" id="XP_015635573.1">
    <property type="nucleotide sequence ID" value="XM_015780087.1"/>
</dbReference>
<dbReference type="SMR" id="Q0JC10"/>
<dbReference type="FunCoup" id="Q0JC10">
    <property type="interactions" value="2243"/>
</dbReference>
<dbReference type="STRING" id="39947.Q0JC10"/>
<dbReference type="PaxDb" id="39947-Q0JC10"/>
<dbReference type="EnsemblPlants" id="Os04t0498600-01">
    <property type="protein sequence ID" value="Os04t0498600-01"/>
    <property type="gene ID" value="Os04g0498600"/>
</dbReference>
<dbReference type="Gramene" id="Os04t0498600-01">
    <property type="protein sequence ID" value="Os04t0498600-01"/>
    <property type="gene ID" value="Os04g0498600"/>
</dbReference>
<dbReference type="KEGG" id="dosa:Os04g0498600"/>
<dbReference type="eggNOG" id="KOG0788">
    <property type="taxonomic scope" value="Eukaryota"/>
</dbReference>
<dbReference type="HOGENOM" id="CLU_023050_2_0_1"/>
<dbReference type="InParanoid" id="Q0JC10"/>
<dbReference type="OMA" id="RNWHIYS"/>
<dbReference type="OrthoDB" id="1068353at2759"/>
<dbReference type="BRENDA" id="4.1.1.50">
    <property type="organism ID" value="8948"/>
</dbReference>
<dbReference type="PlantReactome" id="R-OSA-1119317">
    <property type="pathway name" value="Spermine biosynthesis"/>
</dbReference>
<dbReference type="PlantReactome" id="R-OSA-1119343">
    <property type="pathway name" value="Spermidine biosynthesis"/>
</dbReference>
<dbReference type="PlantReactome" id="R-OSA-1119446">
    <property type="pathway name" value="Lysine degradation I"/>
</dbReference>
<dbReference type="UniPathway" id="UPA00331">
    <property type="reaction ID" value="UER00451"/>
</dbReference>
<dbReference type="Proteomes" id="UP000000763">
    <property type="component" value="Chromosome 4"/>
</dbReference>
<dbReference type="Proteomes" id="UP000007752">
    <property type="component" value="Chromosome 1"/>
</dbReference>
<dbReference type="Proteomes" id="UP000059680">
    <property type="component" value="Chromosome 4"/>
</dbReference>
<dbReference type="ExpressionAtlas" id="Q0JC10">
    <property type="expression patterns" value="baseline and differential"/>
</dbReference>
<dbReference type="GO" id="GO:0005829">
    <property type="term" value="C:cytosol"/>
    <property type="evidence" value="ECO:0000318"/>
    <property type="project" value="GO_Central"/>
</dbReference>
<dbReference type="GO" id="GO:0004014">
    <property type="term" value="F:adenosylmethionine decarboxylase activity"/>
    <property type="evidence" value="ECO:0000318"/>
    <property type="project" value="GO_Central"/>
</dbReference>
<dbReference type="GO" id="GO:0008295">
    <property type="term" value="P:spermidine biosynthetic process"/>
    <property type="evidence" value="ECO:0000318"/>
    <property type="project" value="GO_Central"/>
</dbReference>
<dbReference type="GO" id="GO:0006597">
    <property type="term" value="P:spermine biosynthetic process"/>
    <property type="evidence" value="ECO:0000318"/>
    <property type="project" value="GO_Central"/>
</dbReference>
<dbReference type="FunFam" id="3.30.360.50:FF:000001">
    <property type="entry name" value="S-adenosylmethionine decarboxylase proenzyme"/>
    <property type="match status" value="1"/>
</dbReference>
<dbReference type="FunFam" id="3.60.90.10:FF:000002">
    <property type="entry name" value="S-adenosylmethionine decarboxylase proenzyme"/>
    <property type="match status" value="1"/>
</dbReference>
<dbReference type="Gene3D" id="3.30.360.50">
    <property type="entry name" value="S-adenosylmethionine decarboxylase"/>
    <property type="match status" value="1"/>
</dbReference>
<dbReference type="Gene3D" id="3.60.90.10">
    <property type="entry name" value="S-adenosylmethionine decarboxylase"/>
    <property type="match status" value="1"/>
</dbReference>
<dbReference type="InterPro" id="IPR048283">
    <property type="entry name" value="AdoMetDC-like"/>
</dbReference>
<dbReference type="InterPro" id="IPR001985">
    <property type="entry name" value="S-AdoMet_decarboxylase_euk"/>
</dbReference>
<dbReference type="InterPro" id="IPR016067">
    <property type="entry name" value="S-AdoMet_deCO2ase_core"/>
</dbReference>
<dbReference type="InterPro" id="IPR018166">
    <property type="entry name" value="S-AdoMet_deCO2ase_CS"/>
</dbReference>
<dbReference type="NCBIfam" id="TIGR00535">
    <property type="entry name" value="SAM_DCase"/>
    <property type="match status" value="1"/>
</dbReference>
<dbReference type="PANTHER" id="PTHR11570">
    <property type="entry name" value="S-ADENOSYLMETHIONINE DECARBOXYLASE"/>
    <property type="match status" value="1"/>
</dbReference>
<dbReference type="PANTHER" id="PTHR11570:SF24">
    <property type="entry name" value="S-ADENOSYLMETHIONINE DECARBOXYLASE PROENZYME"/>
    <property type="match status" value="1"/>
</dbReference>
<dbReference type="Pfam" id="PF01536">
    <property type="entry name" value="SAM_decarbox"/>
    <property type="match status" value="1"/>
</dbReference>
<dbReference type="PIRSF" id="PIRSF001355">
    <property type="entry name" value="S-AdenosylMet_decarboxylase"/>
    <property type="match status" value="1"/>
</dbReference>
<dbReference type="SUPFAM" id="SSF56276">
    <property type="entry name" value="S-adenosylmethionine decarboxylase"/>
    <property type="match status" value="1"/>
</dbReference>
<dbReference type="PROSITE" id="PS01336">
    <property type="entry name" value="ADOMETDC"/>
    <property type="match status" value="1"/>
</dbReference>
<protein>
    <recommendedName>
        <fullName>S-adenosylmethionine decarboxylase proenzyme</fullName>
        <shortName>AdoMetDC</shortName>
        <shortName>SAMDC</shortName>
        <ecNumber>4.1.1.50</ecNumber>
    </recommendedName>
    <component>
        <recommendedName>
            <fullName>S-adenosylmethionine decarboxylase alpha chain</fullName>
        </recommendedName>
    </component>
    <component>
        <recommendedName>
            <fullName>S-adenosylmethionine decarboxylase beta chain</fullName>
        </recommendedName>
    </component>
</protein>
<sequence length="398" mass="43283">MGVLSAADPPPVSAIGFEGYEKRLEITFSEAPVFADPDGRGLRALSRAQIDSVLDLARCTIVSELSNKDFDSYVLSESSLFIYSDKIVIKTCGTTKLLLTIPRILELAEGLSMPLAAVKYSRGMFIFPSAQPAPHRSFSEEVAVLNRYFGHLKSGGNAYVIGDPAKPGQKWHIYYATQHPEQPMVTLEMCMTGLDKEKASVFFKTSADGHTSCAKEMTKLSGISDIIPEMEICDFDFEPCGYSMNAIHGSAFSTIHVTPEDGFSYASYEVVGFDASTLAYGDLVKRVLRCFGPSEFSVAVTIFGGHGHAGTWAKELNADAYKCNNMVEQELPCGGLLIYQSFDATEDVPVAVGSPKSVLHCFEAENMVNPAPVKEGKLGNLLPWGEDALEENDGVFDE</sequence>
<proteinExistence type="evidence at transcript level"/>
<evidence type="ECO:0000250" key="1"/>
<evidence type="ECO:0000305" key="2"/>